<dbReference type="EC" id="2.4.2.18" evidence="1"/>
<dbReference type="EMBL" id="CP000462">
    <property type="protein sequence ID" value="ABK38537.1"/>
    <property type="molecule type" value="Genomic_DNA"/>
</dbReference>
<dbReference type="RefSeq" id="WP_011706725.1">
    <property type="nucleotide sequence ID" value="NC_008570.1"/>
</dbReference>
<dbReference type="RefSeq" id="YP_857429.1">
    <property type="nucleotide sequence ID" value="NC_008570.1"/>
</dbReference>
<dbReference type="SMR" id="A0KMC8"/>
<dbReference type="STRING" id="380703.AHA_2925"/>
<dbReference type="EnsemblBacteria" id="ABK38537">
    <property type="protein sequence ID" value="ABK38537"/>
    <property type="gene ID" value="AHA_2925"/>
</dbReference>
<dbReference type="GeneID" id="4487720"/>
<dbReference type="KEGG" id="aha:AHA_2925"/>
<dbReference type="PATRIC" id="fig|380703.7.peg.2923"/>
<dbReference type="eggNOG" id="COG0547">
    <property type="taxonomic scope" value="Bacteria"/>
</dbReference>
<dbReference type="HOGENOM" id="CLU_034315_2_1_6"/>
<dbReference type="OrthoDB" id="9806430at2"/>
<dbReference type="UniPathway" id="UPA00035">
    <property type="reaction ID" value="UER00041"/>
</dbReference>
<dbReference type="Proteomes" id="UP000000756">
    <property type="component" value="Chromosome"/>
</dbReference>
<dbReference type="GO" id="GO:0005829">
    <property type="term" value="C:cytosol"/>
    <property type="evidence" value="ECO:0007669"/>
    <property type="project" value="TreeGrafter"/>
</dbReference>
<dbReference type="GO" id="GO:0004048">
    <property type="term" value="F:anthranilate phosphoribosyltransferase activity"/>
    <property type="evidence" value="ECO:0007669"/>
    <property type="project" value="UniProtKB-UniRule"/>
</dbReference>
<dbReference type="GO" id="GO:0000287">
    <property type="term" value="F:magnesium ion binding"/>
    <property type="evidence" value="ECO:0007669"/>
    <property type="project" value="UniProtKB-UniRule"/>
</dbReference>
<dbReference type="GO" id="GO:0000162">
    <property type="term" value="P:L-tryptophan biosynthetic process"/>
    <property type="evidence" value="ECO:0007669"/>
    <property type="project" value="UniProtKB-UniRule"/>
</dbReference>
<dbReference type="FunFam" id="3.40.1030.10:FF:000002">
    <property type="entry name" value="Anthranilate phosphoribosyltransferase"/>
    <property type="match status" value="1"/>
</dbReference>
<dbReference type="Gene3D" id="3.40.1030.10">
    <property type="entry name" value="Nucleoside phosphorylase/phosphoribosyltransferase catalytic domain"/>
    <property type="match status" value="1"/>
</dbReference>
<dbReference type="Gene3D" id="1.20.970.10">
    <property type="entry name" value="Transferase, Pyrimidine Nucleoside Phosphorylase, Chain C"/>
    <property type="match status" value="1"/>
</dbReference>
<dbReference type="HAMAP" id="MF_00211">
    <property type="entry name" value="TrpD"/>
    <property type="match status" value="1"/>
</dbReference>
<dbReference type="InterPro" id="IPR005940">
    <property type="entry name" value="Anthranilate_Pribosyl_Tfrase"/>
</dbReference>
<dbReference type="InterPro" id="IPR000312">
    <property type="entry name" value="Glycosyl_Trfase_fam3"/>
</dbReference>
<dbReference type="InterPro" id="IPR017459">
    <property type="entry name" value="Glycosyl_Trfase_fam3_N_dom"/>
</dbReference>
<dbReference type="InterPro" id="IPR036320">
    <property type="entry name" value="Glycosyl_Trfase_fam3_N_dom_sf"/>
</dbReference>
<dbReference type="InterPro" id="IPR035902">
    <property type="entry name" value="Nuc_phospho_transferase"/>
</dbReference>
<dbReference type="NCBIfam" id="TIGR01245">
    <property type="entry name" value="trpD"/>
    <property type="match status" value="1"/>
</dbReference>
<dbReference type="PANTHER" id="PTHR43285">
    <property type="entry name" value="ANTHRANILATE PHOSPHORIBOSYLTRANSFERASE"/>
    <property type="match status" value="1"/>
</dbReference>
<dbReference type="PANTHER" id="PTHR43285:SF2">
    <property type="entry name" value="ANTHRANILATE PHOSPHORIBOSYLTRANSFERASE"/>
    <property type="match status" value="1"/>
</dbReference>
<dbReference type="Pfam" id="PF02885">
    <property type="entry name" value="Glycos_trans_3N"/>
    <property type="match status" value="1"/>
</dbReference>
<dbReference type="Pfam" id="PF00591">
    <property type="entry name" value="Glycos_transf_3"/>
    <property type="match status" value="1"/>
</dbReference>
<dbReference type="SUPFAM" id="SSF52418">
    <property type="entry name" value="Nucleoside phosphorylase/phosphoribosyltransferase catalytic domain"/>
    <property type="match status" value="1"/>
</dbReference>
<dbReference type="SUPFAM" id="SSF47648">
    <property type="entry name" value="Nucleoside phosphorylase/phosphoribosyltransferase N-terminal domain"/>
    <property type="match status" value="1"/>
</dbReference>
<feature type="chain" id="PRO_1000042983" description="Anthranilate phosphoribosyltransferase">
    <location>
        <begin position="1"/>
        <end position="342"/>
    </location>
</feature>
<feature type="binding site" evidence="1">
    <location>
        <position position="79"/>
    </location>
    <ligand>
        <name>5-phospho-alpha-D-ribose 1-diphosphate</name>
        <dbReference type="ChEBI" id="CHEBI:58017"/>
    </ligand>
</feature>
<feature type="binding site" evidence="1">
    <location>
        <position position="79"/>
    </location>
    <ligand>
        <name>anthranilate</name>
        <dbReference type="ChEBI" id="CHEBI:16567"/>
        <label>1</label>
    </ligand>
</feature>
<feature type="binding site" evidence="1">
    <location>
        <begin position="82"/>
        <end position="83"/>
    </location>
    <ligand>
        <name>5-phospho-alpha-D-ribose 1-diphosphate</name>
        <dbReference type="ChEBI" id="CHEBI:58017"/>
    </ligand>
</feature>
<feature type="binding site" evidence="1">
    <location>
        <position position="87"/>
    </location>
    <ligand>
        <name>5-phospho-alpha-D-ribose 1-diphosphate</name>
        <dbReference type="ChEBI" id="CHEBI:58017"/>
    </ligand>
</feature>
<feature type="binding site" evidence="1">
    <location>
        <begin position="89"/>
        <end position="92"/>
    </location>
    <ligand>
        <name>5-phospho-alpha-D-ribose 1-diphosphate</name>
        <dbReference type="ChEBI" id="CHEBI:58017"/>
    </ligand>
</feature>
<feature type="binding site" evidence="1">
    <location>
        <position position="91"/>
    </location>
    <ligand>
        <name>Mg(2+)</name>
        <dbReference type="ChEBI" id="CHEBI:18420"/>
        <label>1</label>
    </ligand>
</feature>
<feature type="binding site" evidence="1">
    <location>
        <begin position="107"/>
        <end position="115"/>
    </location>
    <ligand>
        <name>5-phospho-alpha-D-ribose 1-diphosphate</name>
        <dbReference type="ChEBI" id="CHEBI:58017"/>
    </ligand>
</feature>
<feature type="binding site" evidence="1">
    <location>
        <position position="110"/>
    </location>
    <ligand>
        <name>anthranilate</name>
        <dbReference type="ChEBI" id="CHEBI:16567"/>
        <label>1</label>
    </ligand>
</feature>
<feature type="binding site" evidence="1">
    <location>
        <position position="119"/>
    </location>
    <ligand>
        <name>5-phospho-alpha-D-ribose 1-diphosphate</name>
        <dbReference type="ChEBI" id="CHEBI:58017"/>
    </ligand>
</feature>
<feature type="binding site" evidence="1">
    <location>
        <position position="165"/>
    </location>
    <ligand>
        <name>anthranilate</name>
        <dbReference type="ChEBI" id="CHEBI:16567"/>
        <label>2</label>
    </ligand>
</feature>
<feature type="binding site" evidence="1">
    <location>
        <position position="223"/>
    </location>
    <ligand>
        <name>Mg(2+)</name>
        <dbReference type="ChEBI" id="CHEBI:18420"/>
        <label>2</label>
    </ligand>
</feature>
<feature type="binding site" evidence="1">
    <location>
        <position position="224"/>
    </location>
    <ligand>
        <name>Mg(2+)</name>
        <dbReference type="ChEBI" id="CHEBI:18420"/>
        <label>1</label>
    </ligand>
</feature>
<feature type="binding site" evidence="1">
    <location>
        <position position="224"/>
    </location>
    <ligand>
        <name>Mg(2+)</name>
        <dbReference type="ChEBI" id="CHEBI:18420"/>
        <label>2</label>
    </ligand>
</feature>
<keyword id="KW-0028">Amino-acid biosynthesis</keyword>
<keyword id="KW-0057">Aromatic amino acid biosynthesis</keyword>
<keyword id="KW-0328">Glycosyltransferase</keyword>
<keyword id="KW-0460">Magnesium</keyword>
<keyword id="KW-0479">Metal-binding</keyword>
<keyword id="KW-1185">Reference proteome</keyword>
<keyword id="KW-0808">Transferase</keyword>
<keyword id="KW-0822">Tryptophan biosynthesis</keyword>
<comment type="function">
    <text evidence="1">Catalyzes the transfer of the phosphoribosyl group of 5-phosphorylribose-1-pyrophosphate (PRPP) to anthranilate to yield N-(5'-phosphoribosyl)-anthranilate (PRA).</text>
</comment>
<comment type="catalytic activity">
    <reaction evidence="1">
        <text>N-(5-phospho-beta-D-ribosyl)anthranilate + diphosphate = 5-phospho-alpha-D-ribose 1-diphosphate + anthranilate</text>
        <dbReference type="Rhea" id="RHEA:11768"/>
        <dbReference type="ChEBI" id="CHEBI:16567"/>
        <dbReference type="ChEBI" id="CHEBI:18277"/>
        <dbReference type="ChEBI" id="CHEBI:33019"/>
        <dbReference type="ChEBI" id="CHEBI:58017"/>
        <dbReference type="EC" id="2.4.2.18"/>
    </reaction>
</comment>
<comment type="cofactor">
    <cofactor evidence="1">
        <name>Mg(2+)</name>
        <dbReference type="ChEBI" id="CHEBI:18420"/>
    </cofactor>
    <text evidence="1">Binds 2 magnesium ions per monomer.</text>
</comment>
<comment type="pathway">
    <text evidence="1">Amino-acid biosynthesis; L-tryptophan biosynthesis; L-tryptophan from chorismate: step 2/5.</text>
</comment>
<comment type="subunit">
    <text evidence="1">Homodimer.</text>
</comment>
<comment type="similarity">
    <text evidence="1">Belongs to the anthranilate phosphoribosyltransferase family.</text>
</comment>
<reference key="1">
    <citation type="journal article" date="2006" name="J. Bacteriol.">
        <title>Genome sequence of Aeromonas hydrophila ATCC 7966T: jack of all trades.</title>
        <authorList>
            <person name="Seshadri R."/>
            <person name="Joseph S.W."/>
            <person name="Chopra A.K."/>
            <person name="Sha J."/>
            <person name="Shaw J."/>
            <person name="Graf J."/>
            <person name="Haft D.H."/>
            <person name="Wu M."/>
            <person name="Ren Q."/>
            <person name="Rosovitz M.J."/>
            <person name="Madupu R."/>
            <person name="Tallon L."/>
            <person name="Kim M."/>
            <person name="Jin S."/>
            <person name="Vuong H."/>
            <person name="Stine O.C."/>
            <person name="Ali A."/>
            <person name="Horneman A.J."/>
            <person name="Heidelberg J.F."/>
        </authorList>
    </citation>
    <scope>NUCLEOTIDE SEQUENCE [LARGE SCALE GENOMIC DNA]</scope>
    <source>
        <strain>ATCC 7966 / DSM 30187 / BCRC 13018 / CCUG 14551 / JCM 1027 / KCTC 2358 / NCIMB 9240 / NCTC 8049</strain>
    </source>
</reference>
<gene>
    <name evidence="1" type="primary">trpD</name>
    <name type="ordered locus">AHA_2925</name>
</gene>
<name>TRPD_AERHH</name>
<accession>A0KMC8</accession>
<organism>
    <name type="scientific">Aeromonas hydrophila subsp. hydrophila (strain ATCC 7966 / DSM 30187 / BCRC 13018 / CCUG 14551 / JCM 1027 / KCTC 2358 / NCIMB 9240 / NCTC 8049)</name>
    <dbReference type="NCBI Taxonomy" id="380703"/>
    <lineage>
        <taxon>Bacteria</taxon>
        <taxon>Pseudomonadati</taxon>
        <taxon>Pseudomonadota</taxon>
        <taxon>Gammaproteobacteria</taxon>
        <taxon>Aeromonadales</taxon>
        <taxon>Aeromonadaceae</taxon>
        <taxon>Aeromonas</taxon>
    </lineage>
</organism>
<protein>
    <recommendedName>
        <fullName evidence="1">Anthranilate phosphoribosyltransferase</fullName>
        <ecNumber evidence="1">2.4.2.18</ecNumber>
    </recommendedName>
</protein>
<proteinExistence type="inferred from homology"/>
<evidence type="ECO:0000255" key="1">
    <source>
        <dbReference type="HAMAP-Rule" id="MF_00211"/>
    </source>
</evidence>
<sequence>MHHHLNTLYQGQSLSRESTRDAFGQVVRGEVDPIVLASLLTALKIKGETPEEIAGAAEALLAEARDFPRPDYEFCDIVGTGGDGLNTINVSTTSALVAAACGLKVAKHGNRSVSSKSGSSDLLDKMGIKLDMSPAQARRCLDELGICFLFAPQYHAGVRHAMPVRQALKTRTLFNVLGPLINPARPTYQLMGVYAPELVRPIAETLLALGLKTGMVVHGAGLDEIAIHGPTQVAQIRDGEIREFLLTPADFGLETYPVSAIQGGEPEENRAITAAILEGRGTPAHNAAIAANVAPLLLMAGKAKDLKSAAAEVLAVLASGKTAELAARLATLSHQEASHQEA</sequence>